<accession>Q7UZY6</accession>
<feature type="chain" id="PRO_0000091183" description="Elongation factor G">
    <location>
        <begin position="1"/>
        <end position="691"/>
    </location>
</feature>
<feature type="domain" description="tr-type G">
    <location>
        <begin position="8"/>
        <end position="282"/>
    </location>
</feature>
<feature type="binding site" evidence="1">
    <location>
        <begin position="17"/>
        <end position="24"/>
    </location>
    <ligand>
        <name>GTP</name>
        <dbReference type="ChEBI" id="CHEBI:37565"/>
    </ligand>
</feature>
<feature type="binding site" evidence="1">
    <location>
        <begin position="81"/>
        <end position="85"/>
    </location>
    <ligand>
        <name>GTP</name>
        <dbReference type="ChEBI" id="CHEBI:37565"/>
    </ligand>
</feature>
<feature type="binding site" evidence="1">
    <location>
        <begin position="135"/>
        <end position="138"/>
    </location>
    <ligand>
        <name>GTP</name>
        <dbReference type="ChEBI" id="CHEBI:37565"/>
    </ligand>
</feature>
<protein>
    <recommendedName>
        <fullName evidence="1">Elongation factor G</fullName>
        <shortName evidence="1">EF-G</shortName>
    </recommendedName>
</protein>
<proteinExistence type="inferred from homology"/>
<keyword id="KW-0963">Cytoplasm</keyword>
<keyword id="KW-0251">Elongation factor</keyword>
<keyword id="KW-0342">GTP-binding</keyword>
<keyword id="KW-0547">Nucleotide-binding</keyword>
<keyword id="KW-0648">Protein biosynthesis</keyword>
<gene>
    <name evidence="1" type="primary">fusA</name>
    <name type="ordered locus">PMM1509</name>
</gene>
<sequence length="691" mass="75690">MARDFPLERVRNIGIAAHIDAGKTTTTERILFYSGVVHKIGEVHDGAAVTDWMAQERERGITITAAAISTSWQDHRINIIDTPGHVDFTIEVERSMRVLDGVIAVFCAVGGVQPQSETVWRQADRYSVPRMVFVNKMDRTGADFLKVNQQIKDRLKANAFPIQLPIGAEGDLSGIIDLVSNKAYLYKNDLGTDIEEAPIPDEMKDEALEWRSKLMESVAENDEELIEIFLDKGELTEDQLKKGIREGVLKHGLVPVLCGSAFKNKGVQLVLDAVVDYLPAPIDVKPIQGVLPNGKEDVRPSDDNAPFSALAFKVMSDPYGKLTFVRMYSGVLSKGSYVMNSTKDAKERISRLVILKADEREEVDELRAGDLGAVLGLKNTTTGDTLCNTDDPIVLETLFIPEPVISVAVEPKTKGDMEKLSKALQALSEEDPTFRVSTDQETNQTVIAGMGELHLEILVDRMLREFKVEANIGAPQVSYRETIRSSSKGEGKYARQTGGKGQYGHVVIEMEPAEVGKGFEFVNKIVGGTVPKEYIGPASNGMKETCESGVLAGYPLIDVKVTLVDGSFHDVDSSEMAFKIAGSMAFKDGVKKCNPVLLEPMMKVEVESPDDFLGSVIGDLSSRRGQVEGQSVDDGLSKVQAKVPLAEMFGYATQLRSMTQGRGIFSMEFANYEEVPRNVAEAIISKNQGNS</sequence>
<name>EFG_PROMP</name>
<evidence type="ECO:0000255" key="1">
    <source>
        <dbReference type="HAMAP-Rule" id="MF_00054"/>
    </source>
</evidence>
<organism>
    <name type="scientific">Prochlorococcus marinus subsp. pastoris (strain CCMP1986 / NIES-2087 / MED4)</name>
    <dbReference type="NCBI Taxonomy" id="59919"/>
    <lineage>
        <taxon>Bacteria</taxon>
        <taxon>Bacillati</taxon>
        <taxon>Cyanobacteriota</taxon>
        <taxon>Cyanophyceae</taxon>
        <taxon>Synechococcales</taxon>
        <taxon>Prochlorococcaceae</taxon>
        <taxon>Prochlorococcus</taxon>
    </lineage>
</organism>
<reference key="1">
    <citation type="journal article" date="2003" name="Nature">
        <title>Genome divergence in two Prochlorococcus ecotypes reflects oceanic niche differentiation.</title>
        <authorList>
            <person name="Rocap G."/>
            <person name="Larimer F.W."/>
            <person name="Lamerdin J.E."/>
            <person name="Malfatti S."/>
            <person name="Chain P."/>
            <person name="Ahlgren N.A."/>
            <person name="Arellano A."/>
            <person name="Coleman M."/>
            <person name="Hauser L."/>
            <person name="Hess W.R."/>
            <person name="Johnson Z.I."/>
            <person name="Land M.L."/>
            <person name="Lindell D."/>
            <person name="Post A.F."/>
            <person name="Regala W."/>
            <person name="Shah M."/>
            <person name="Shaw S.L."/>
            <person name="Steglich C."/>
            <person name="Sullivan M.B."/>
            <person name="Ting C.S."/>
            <person name="Tolonen A."/>
            <person name="Webb E.A."/>
            <person name="Zinser E.R."/>
            <person name="Chisholm S.W."/>
        </authorList>
    </citation>
    <scope>NUCLEOTIDE SEQUENCE [LARGE SCALE GENOMIC DNA]</scope>
    <source>
        <strain>CCMP1986 / NIES-2087 / MED4</strain>
    </source>
</reference>
<dbReference type="EMBL" id="BX548174">
    <property type="protein sequence ID" value="CAE19968.1"/>
    <property type="molecule type" value="Genomic_DNA"/>
</dbReference>
<dbReference type="RefSeq" id="WP_011133137.1">
    <property type="nucleotide sequence ID" value="NC_005072.1"/>
</dbReference>
<dbReference type="SMR" id="Q7UZY6"/>
<dbReference type="STRING" id="59919.PMM1509"/>
<dbReference type="KEGG" id="pmm:PMM1509"/>
<dbReference type="eggNOG" id="COG0480">
    <property type="taxonomic scope" value="Bacteria"/>
</dbReference>
<dbReference type="HOGENOM" id="CLU_002794_4_1_3"/>
<dbReference type="OrthoDB" id="580826at2"/>
<dbReference type="Proteomes" id="UP000001026">
    <property type="component" value="Chromosome"/>
</dbReference>
<dbReference type="GO" id="GO:0005737">
    <property type="term" value="C:cytoplasm"/>
    <property type="evidence" value="ECO:0007669"/>
    <property type="project" value="UniProtKB-SubCell"/>
</dbReference>
<dbReference type="GO" id="GO:0005525">
    <property type="term" value="F:GTP binding"/>
    <property type="evidence" value="ECO:0007669"/>
    <property type="project" value="UniProtKB-UniRule"/>
</dbReference>
<dbReference type="GO" id="GO:0003924">
    <property type="term" value="F:GTPase activity"/>
    <property type="evidence" value="ECO:0007669"/>
    <property type="project" value="InterPro"/>
</dbReference>
<dbReference type="GO" id="GO:0003746">
    <property type="term" value="F:translation elongation factor activity"/>
    <property type="evidence" value="ECO:0007669"/>
    <property type="project" value="UniProtKB-UniRule"/>
</dbReference>
<dbReference type="GO" id="GO:0032790">
    <property type="term" value="P:ribosome disassembly"/>
    <property type="evidence" value="ECO:0007669"/>
    <property type="project" value="TreeGrafter"/>
</dbReference>
<dbReference type="CDD" id="cd01886">
    <property type="entry name" value="EF-G"/>
    <property type="match status" value="1"/>
</dbReference>
<dbReference type="CDD" id="cd16262">
    <property type="entry name" value="EFG_III"/>
    <property type="match status" value="1"/>
</dbReference>
<dbReference type="CDD" id="cd01434">
    <property type="entry name" value="EFG_mtEFG1_IV"/>
    <property type="match status" value="1"/>
</dbReference>
<dbReference type="CDD" id="cd03713">
    <property type="entry name" value="EFG_mtEFG_C"/>
    <property type="match status" value="1"/>
</dbReference>
<dbReference type="CDD" id="cd04088">
    <property type="entry name" value="EFG_mtEFG_II"/>
    <property type="match status" value="1"/>
</dbReference>
<dbReference type="FunFam" id="2.40.30.10:FF:000006">
    <property type="entry name" value="Elongation factor G"/>
    <property type="match status" value="1"/>
</dbReference>
<dbReference type="FunFam" id="3.30.230.10:FF:000003">
    <property type="entry name" value="Elongation factor G"/>
    <property type="match status" value="1"/>
</dbReference>
<dbReference type="FunFam" id="3.30.70.240:FF:000001">
    <property type="entry name" value="Elongation factor G"/>
    <property type="match status" value="1"/>
</dbReference>
<dbReference type="FunFam" id="3.30.70.870:FF:000001">
    <property type="entry name" value="Elongation factor G"/>
    <property type="match status" value="1"/>
</dbReference>
<dbReference type="FunFam" id="3.40.50.300:FF:000029">
    <property type="entry name" value="Elongation factor G"/>
    <property type="match status" value="1"/>
</dbReference>
<dbReference type="Gene3D" id="3.30.230.10">
    <property type="match status" value="1"/>
</dbReference>
<dbReference type="Gene3D" id="3.30.70.240">
    <property type="match status" value="1"/>
</dbReference>
<dbReference type="Gene3D" id="3.30.70.870">
    <property type="entry name" value="Elongation Factor G (Translational Gtpase), domain 3"/>
    <property type="match status" value="1"/>
</dbReference>
<dbReference type="Gene3D" id="3.40.50.300">
    <property type="entry name" value="P-loop containing nucleotide triphosphate hydrolases"/>
    <property type="match status" value="1"/>
</dbReference>
<dbReference type="Gene3D" id="2.40.30.10">
    <property type="entry name" value="Translation factors"/>
    <property type="match status" value="1"/>
</dbReference>
<dbReference type="HAMAP" id="MF_00054_B">
    <property type="entry name" value="EF_G_EF_2_B"/>
    <property type="match status" value="1"/>
</dbReference>
<dbReference type="InterPro" id="IPR041095">
    <property type="entry name" value="EFG_II"/>
</dbReference>
<dbReference type="InterPro" id="IPR009022">
    <property type="entry name" value="EFG_III"/>
</dbReference>
<dbReference type="InterPro" id="IPR035647">
    <property type="entry name" value="EFG_III/V"/>
</dbReference>
<dbReference type="InterPro" id="IPR047872">
    <property type="entry name" value="EFG_IV"/>
</dbReference>
<dbReference type="InterPro" id="IPR035649">
    <property type="entry name" value="EFG_V"/>
</dbReference>
<dbReference type="InterPro" id="IPR000640">
    <property type="entry name" value="EFG_V-like"/>
</dbReference>
<dbReference type="InterPro" id="IPR004161">
    <property type="entry name" value="EFTu-like_2"/>
</dbReference>
<dbReference type="InterPro" id="IPR031157">
    <property type="entry name" value="G_TR_CS"/>
</dbReference>
<dbReference type="InterPro" id="IPR027417">
    <property type="entry name" value="P-loop_NTPase"/>
</dbReference>
<dbReference type="InterPro" id="IPR020568">
    <property type="entry name" value="Ribosomal_Su5_D2-typ_SF"/>
</dbReference>
<dbReference type="InterPro" id="IPR014721">
    <property type="entry name" value="Ribsml_uS5_D2-typ_fold_subgr"/>
</dbReference>
<dbReference type="InterPro" id="IPR005225">
    <property type="entry name" value="Small_GTP-bd"/>
</dbReference>
<dbReference type="InterPro" id="IPR000795">
    <property type="entry name" value="T_Tr_GTP-bd_dom"/>
</dbReference>
<dbReference type="InterPro" id="IPR009000">
    <property type="entry name" value="Transl_B-barrel_sf"/>
</dbReference>
<dbReference type="InterPro" id="IPR004540">
    <property type="entry name" value="Transl_elong_EFG/EF2"/>
</dbReference>
<dbReference type="InterPro" id="IPR005517">
    <property type="entry name" value="Transl_elong_EFG/EF2_IV"/>
</dbReference>
<dbReference type="NCBIfam" id="TIGR00484">
    <property type="entry name" value="EF-G"/>
    <property type="match status" value="1"/>
</dbReference>
<dbReference type="NCBIfam" id="NF009379">
    <property type="entry name" value="PRK12740.1-3"/>
    <property type="match status" value="1"/>
</dbReference>
<dbReference type="NCBIfam" id="NF009381">
    <property type="entry name" value="PRK12740.1-5"/>
    <property type="match status" value="1"/>
</dbReference>
<dbReference type="NCBIfam" id="TIGR00231">
    <property type="entry name" value="small_GTP"/>
    <property type="match status" value="1"/>
</dbReference>
<dbReference type="PANTHER" id="PTHR43261:SF1">
    <property type="entry name" value="RIBOSOME-RELEASING FACTOR 2, MITOCHONDRIAL"/>
    <property type="match status" value="1"/>
</dbReference>
<dbReference type="PANTHER" id="PTHR43261">
    <property type="entry name" value="TRANSLATION ELONGATION FACTOR G-RELATED"/>
    <property type="match status" value="1"/>
</dbReference>
<dbReference type="Pfam" id="PF00679">
    <property type="entry name" value="EFG_C"/>
    <property type="match status" value="1"/>
</dbReference>
<dbReference type="Pfam" id="PF14492">
    <property type="entry name" value="EFG_III"/>
    <property type="match status" value="1"/>
</dbReference>
<dbReference type="Pfam" id="PF03764">
    <property type="entry name" value="EFG_IV"/>
    <property type="match status" value="1"/>
</dbReference>
<dbReference type="Pfam" id="PF00009">
    <property type="entry name" value="GTP_EFTU"/>
    <property type="match status" value="1"/>
</dbReference>
<dbReference type="Pfam" id="PF03144">
    <property type="entry name" value="GTP_EFTU_D2"/>
    <property type="match status" value="1"/>
</dbReference>
<dbReference type="PRINTS" id="PR00315">
    <property type="entry name" value="ELONGATNFCT"/>
</dbReference>
<dbReference type="SMART" id="SM00838">
    <property type="entry name" value="EFG_C"/>
    <property type="match status" value="1"/>
</dbReference>
<dbReference type="SMART" id="SM00889">
    <property type="entry name" value="EFG_IV"/>
    <property type="match status" value="1"/>
</dbReference>
<dbReference type="SUPFAM" id="SSF54980">
    <property type="entry name" value="EF-G C-terminal domain-like"/>
    <property type="match status" value="2"/>
</dbReference>
<dbReference type="SUPFAM" id="SSF52540">
    <property type="entry name" value="P-loop containing nucleoside triphosphate hydrolases"/>
    <property type="match status" value="1"/>
</dbReference>
<dbReference type="SUPFAM" id="SSF54211">
    <property type="entry name" value="Ribosomal protein S5 domain 2-like"/>
    <property type="match status" value="1"/>
</dbReference>
<dbReference type="SUPFAM" id="SSF50447">
    <property type="entry name" value="Translation proteins"/>
    <property type="match status" value="1"/>
</dbReference>
<dbReference type="PROSITE" id="PS00301">
    <property type="entry name" value="G_TR_1"/>
    <property type="match status" value="1"/>
</dbReference>
<dbReference type="PROSITE" id="PS51722">
    <property type="entry name" value="G_TR_2"/>
    <property type="match status" value="1"/>
</dbReference>
<comment type="function">
    <text evidence="1">Catalyzes the GTP-dependent ribosomal translocation step during translation elongation. During this step, the ribosome changes from the pre-translocational (PRE) to the post-translocational (POST) state as the newly formed A-site-bound peptidyl-tRNA and P-site-bound deacylated tRNA move to the P and E sites, respectively. Catalyzes the coordinated movement of the two tRNA molecules, the mRNA and conformational changes in the ribosome.</text>
</comment>
<comment type="subcellular location">
    <subcellularLocation>
        <location evidence="1">Cytoplasm</location>
    </subcellularLocation>
</comment>
<comment type="similarity">
    <text evidence="1">Belongs to the TRAFAC class translation factor GTPase superfamily. Classic translation factor GTPase family. EF-G/EF-2 subfamily.</text>
</comment>